<sequence>MTEDPKQIAQETESLRKVAFFGIAVSTIATLTAIIAVPMLYNYMQHVQSSLQSEVEFCQHRSNGLWDEYKRFQGVSGVEGRIKRDAYHRSLGVSGASRKARRQSYGNDAAVGGFGGSSGGSCCSCGSGAAGPAGSPGQDGAPGNDGAPGAPGNPGQDASEDQTAGPDSFCFDCPAGPPGPSGAPGQKGPSGAPGAPGQSGGAALPGPPGPAGPPGPAGQPGSNGNAGAPGAPGQVVDVPGTPGPAGPPGSPGPAGAPGQPGQAGSSQPGGPGPQGDAGAPGAPGAPGQAGAPGQDGESGSEGACDHCPPPRTAPGY</sequence>
<comment type="function">
    <text>Nematode cuticles are composed largely of collagen-like proteins. The cuticle functions both as an exoskeleton and as a barrier to protect the worm from its environment.</text>
</comment>
<comment type="subunit">
    <text>Collagen polypeptide chains are complexed within the cuticle by disulfide bonds and other types of covalent cross-links.</text>
</comment>
<comment type="similarity">
    <text evidence="3">Belongs to the cuticular collagen family.</text>
</comment>
<protein>
    <recommendedName>
        <fullName>Cuticle collagen 12</fullName>
    </recommendedName>
</protein>
<feature type="signal peptide" evidence="1">
    <location>
        <begin position="1"/>
        <end position="36"/>
    </location>
</feature>
<feature type="chain" id="PRO_0000006424" description="Cuticle collagen 12">
    <location>
        <begin position="37"/>
        <end position="316"/>
    </location>
</feature>
<feature type="region of interest" description="Disordered" evidence="2">
    <location>
        <begin position="127"/>
        <end position="316"/>
    </location>
</feature>
<feature type="region of interest" description="Triple-helical region">
    <location>
        <begin position="128"/>
        <end position="157"/>
    </location>
</feature>
<feature type="region of interest" description="Triple-helical region">
    <location>
        <begin position="176"/>
        <end position="202"/>
    </location>
</feature>
<feature type="region of interest" description="Triple-helical region">
    <location>
        <begin position="206"/>
        <end position="235"/>
    </location>
</feature>
<feature type="region of interest" description="Triple-helical region">
    <location>
        <begin position="240"/>
        <end position="266"/>
    </location>
</feature>
<feature type="region of interest" description="Triple-helical region">
    <location>
        <begin position="269"/>
        <end position="304"/>
    </location>
</feature>
<feature type="compositionally biased region" description="Low complexity" evidence="2">
    <location>
        <begin position="127"/>
        <end position="157"/>
    </location>
</feature>
<feature type="compositionally biased region" description="Low complexity" evidence="2">
    <location>
        <begin position="183"/>
        <end position="204"/>
    </location>
</feature>
<feature type="compositionally biased region" description="Pro residues" evidence="2">
    <location>
        <begin position="205"/>
        <end position="217"/>
    </location>
</feature>
<feature type="compositionally biased region" description="Low complexity" evidence="2">
    <location>
        <begin position="219"/>
        <end position="234"/>
    </location>
</feature>
<feature type="compositionally biased region" description="Pro residues" evidence="2">
    <location>
        <begin position="241"/>
        <end position="251"/>
    </location>
</feature>
<feature type="compositionally biased region" description="Low complexity" evidence="2">
    <location>
        <begin position="256"/>
        <end position="266"/>
    </location>
</feature>
<feature type="compositionally biased region" description="Low complexity" evidence="2">
    <location>
        <begin position="276"/>
        <end position="295"/>
    </location>
</feature>
<feature type="compositionally biased region" description="Pro residues" evidence="2">
    <location>
        <begin position="307"/>
        <end position="316"/>
    </location>
</feature>
<name>COL12_CAEEL</name>
<dbReference type="EMBL" id="X51622">
    <property type="protein sequence ID" value="CAA35954.1"/>
    <property type="molecule type" value="Genomic_DNA"/>
</dbReference>
<dbReference type="EMBL" id="Z73972">
    <property type="protein sequence ID" value="CAA98257.1"/>
    <property type="molecule type" value="Genomic_DNA"/>
</dbReference>
<dbReference type="PIR" id="S08169">
    <property type="entry name" value="S08169"/>
</dbReference>
<dbReference type="RefSeq" id="NP_505678.1">
    <property type="nucleotide sequence ID" value="NM_073277.6"/>
</dbReference>
<dbReference type="SMR" id="P20630"/>
<dbReference type="FunCoup" id="P20630">
    <property type="interactions" value="20"/>
</dbReference>
<dbReference type="STRING" id="6239.F15H10.1.1"/>
<dbReference type="PaxDb" id="6239-F15H10.1.1"/>
<dbReference type="PeptideAtlas" id="P20630"/>
<dbReference type="EnsemblMetazoa" id="F15H10.1.1">
    <property type="protein sequence ID" value="F15H10.1.1"/>
    <property type="gene ID" value="WBGene00000601"/>
</dbReference>
<dbReference type="EnsemblMetazoa" id="F15H10.1.2">
    <property type="protein sequence ID" value="F15H10.1.2"/>
    <property type="gene ID" value="WBGene00000601"/>
</dbReference>
<dbReference type="EnsemblMetazoa" id="F15H10.1.3">
    <property type="protein sequence ID" value="F15H10.1.3"/>
    <property type="gene ID" value="WBGene00000601"/>
</dbReference>
<dbReference type="GeneID" id="179453"/>
<dbReference type="KEGG" id="cel:CELE_F15H10.1"/>
<dbReference type="UCSC" id="F15H10.1.1">
    <property type="organism name" value="c. elegans"/>
</dbReference>
<dbReference type="AGR" id="WB:WBGene00000601"/>
<dbReference type="CTD" id="179453"/>
<dbReference type="WormBase" id="F15H10.1">
    <property type="protein sequence ID" value="CE05638"/>
    <property type="gene ID" value="WBGene00000601"/>
    <property type="gene designation" value="col-12"/>
</dbReference>
<dbReference type="eggNOG" id="KOG3544">
    <property type="taxonomic scope" value="Eukaryota"/>
</dbReference>
<dbReference type="GeneTree" id="ENSGT00940000168256"/>
<dbReference type="HOGENOM" id="CLU_001074_4_2_1"/>
<dbReference type="InParanoid" id="P20630"/>
<dbReference type="OMA" id="EDTCCSC"/>
<dbReference type="OrthoDB" id="5870983at2759"/>
<dbReference type="PhylomeDB" id="P20630"/>
<dbReference type="PRO" id="PR:P20630"/>
<dbReference type="Proteomes" id="UP000001940">
    <property type="component" value="Chromosome V"/>
</dbReference>
<dbReference type="Bgee" id="WBGene00000601">
    <property type="expression patterns" value="Expressed in adult organism and 3 other cell types or tissues"/>
</dbReference>
<dbReference type="GO" id="GO:0005581">
    <property type="term" value="C:collagen trimer"/>
    <property type="evidence" value="ECO:0007669"/>
    <property type="project" value="UniProtKB-KW"/>
</dbReference>
<dbReference type="GO" id="GO:0042302">
    <property type="term" value="F:structural constituent of cuticle"/>
    <property type="evidence" value="ECO:0007669"/>
    <property type="project" value="UniProtKB-KW"/>
</dbReference>
<dbReference type="InterPro" id="IPR002486">
    <property type="entry name" value="Col_cuticle_N"/>
</dbReference>
<dbReference type="InterPro" id="IPR008160">
    <property type="entry name" value="Collagen"/>
</dbReference>
<dbReference type="PANTHER" id="PTHR24637">
    <property type="entry name" value="COLLAGEN"/>
    <property type="match status" value="1"/>
</dbReference>
<dbReference type="PANTHER" id="PTHR24637:SF267">
    <property type="entry name" value="CUTICLE COLLAGEN 12-RELATED"/>
    <property type="match status" value="1"/>
</dbReference>
<dbReference type="Pfam" id="PF01484">
    <property type="entry name" value="Col_cuticle_N"/>
    <property type="match status" value="1"/>
</dbReference>
<dbReference type="Pfam" id="PF01391">
    <property type="entry name" value="Collagen"/>
    <property type="match status" value="2"/>
</dbReference>
<dbReference type="SMART" id="SM01088">
    <property type="entry name" value="Col_cuticle_N"/>
    <property type="match status" value="1"/>
</dbReference>
<accession>P20630</accession>
<proteinExistence type="inferred from homology"/>
<reference key="1">
    <citation type="journal article" date="1990" name="J. Mol. Biol.">
        <title>Tandemly duplicated Caenorhabditis elegans collagen genes differ in their modes of splicing.</title>
        <authorList>
            <person name="Park Y.-S."/>
            <person name="Kramer J.M."/>
        </authorList>
    </citation>
    <scope>NUCLEOTIDE SEQUENCE [GENOMIC DNA]</scope>
    <source>
        <strain>Bristol N2</strain>
    </source>
</reference>
<reference key="2">
    <citation type="journal article" date="1998" name="Science">
        <title>Genome sequence of the nematode C. elegans: a platform for investigating biology.</title>
        <authorList>
            <consortium name="The C. elegans sequencing consortium"/>
        </authorList>
    </citation>
    <scope>NUCLEOTIDE SEQUENCE [LARGE SCALE GENOMIC DNA]</scope>
    <source>
        <strain>Bristol N2</strain>
    </source>
</reference>
<organism>
    <name type="scientific">Caenorhabditis elegans</name>
    <dbReference type="NCBI Taxonomy" id="6239"/>
    <lineage>
        <taxon>Eukaryota</taxon>
        <taxon>Metazoa</taxon>
        <taxon>Ecdysozoa</taxon>
        <taxon>Nematoda</taxon>
        <taxon>Chromadorea</taxon>
        <taxon>Rhabditida</taxon>
        <taxon>Rhabditina</taxon>
        <taxon>Rhabditomorpha</taxon>
        <taxon>Rhabditoidea</taxon>
        <taxon>Rhabditidae</taxon>
        <taxon>Peloderinae</taxon>
        <taxon>Caenorhabditis</taxon>
    </lineage>
</organism>
<keyword id="KW-0176">Collagen</keyword>
<keyword id="KW-0193">Cuticle</keyword>
<keyword id="KW-1015">Disulfide bond</keyword>
<keyword id="KW-1185">Reference proteome</keyword>
<keyword id="KW-0677">Repeat</keyword>
<keyword id="KW-0732">Signal</keyword>
<gene>
    <name type="primary">col-12</name>
    <name type="ORF">F15H10.1</name>
</gene>
<evidence type="ECO:0000255" key="1"/>
<evidence type="ECO:0000256" key="2">
    <source>
        <dbReference type="SAM" id="MobiDB-lite"/>
    </source>
</evidence>
<evidence type="ECO:0000305" key="3"/>